<dbReference type="EMBL" id="M35076">
    <property type="protein sequence ID" value="AAA42812.1"/>
    <property type="molecule type" value="mRNA"/>
</dbReference>
<dbReference type="EMBL" id="AF295543">
    <property type="protein sequence ID" value="AAL49394.1"/>
    <property type="molecule type" value="Genomic_RNA"/>
</dbReference>
<dbReference type="EMBL" id="AF295544">
    <property type="protein sequence ID" value="AAL49405.1"/>
    <property type="molecule type" value="Genomic_RNA"/>
</dbReference>
<dbReference type="PIR" id="A38525">
    <property type="entry name" value="VHNZB4"/>
</dbReference>
<dbReference type="SMR" id="P22677"/>
<dbReference type="DIP" id="DIP-1085N"/>
<dbReference type="IntAct" id="P22677">
    <property type="interactions" value="1"/>
</dbReference>
<dbReference type="Proteomes" id="UP000007616">
    <property type="component" value="Genome"/>
</dbReference>
<dbReference type="GO" id="GO:0019029">
    <property type="term" value="C:helical viral capsid"/>
    <property type="evidence" value="ECO:0007669"/>
    <property type="project" value="UniProtKB-KW"/>
</dbReference>
<dbReference type="GO" id="GO:0030430">
    <property type="term" value="C:host cell cytoplasm"/>
    <property type="evidence" value="ECO:0007669"/>
    <property type="project" value="UniProtKB-SubCell"/>
</dbReference>
<dbReference type="GO" id="GO:1990904">
    <property type="term" value="C:ribonucleoprotein complex"/>
    <property type="evidence" value="ECO:0007669"/>
    <property type="project" value="UniProtKB-KW"/>
</dbReference>
<dbReference type="GO" id="GO:0019013">
    <property type="term" value="C:viral nucleocapsid"/>
    <property type="evidence" value="ECO:0007669"/>
    <property type="project" value="UniProtKB-KW"/>
</dbReference>
<dbReference type="GO" id="GO:0030291">
    <property type="term" value="F:protein serine/threonine kinase inhibitor activity"/>
    <property type="evidence" value="ECO:0007669"/>
    <property type="project" value="UniProtKB-KW"/>
</dbReference>
<dbReference type="GO" id="GO:0003723">
    <property type="term" value="F:RNA binding"/>
    <property type="evidence" value="ECO:0007669"/>
    <property type="project" value="UniProtKB-KW"/>
</dbReference>
<dbReference type="GO" id="GO:0039545">
    <property type="term" value="P:symbiont-mediated suppression of host cytoplasmic pattern recognition receptor signaling pathway via inhibition of MAVS activity"/>
    <property type="evidence" value="ECO:0007669"/>
    <property type="project" value="UniProtKB-KW"/>
</dbReference>
<dbReference type="GO" id="GO:0039554">
    <property type="term" value="P:symbiont-mediated suppression of host cytoplasmic pattern recognition receptor signaling pathway via inhibition of MDA-5 activity"/>
    <property type="evidence" value="ECO:0007669"/>
    <property type="project" value="UniProtKB-KW"/>
</dbReference>
<dbReference type="GO" id="GO:0085034">
    <property type="term" value="P:symbiont-mediated suppression of host NF-kappaB cascade"/>
    <property type="evidence" value="ECO:0007669"/>
    <property type="project" value="UniProtKB-KW"/>
</dbReference>
<dbReference type="GO" id="GO:0039580">
    <property type="term" value="P:symbiont-mediated suppression of host PKR/eIFalpha signaling"/>
    <property type="evidence" value="ECO:0007669"/>
    <property type="project" value="UniProtKB-KW"/>
</dbReference>
<dbReference type="GO" id="GO:0039502">
    <property type="term" value="P:symbiont-mediated suppression of host type I interferon-mediated signaling pathway"/>
    <property type="evidence" value="ECO:0007669"/>
    <property type="project" value="UniProtKB-KW"/>
</dbReference>
<dbReference type="InterPro" id="IPR004930">
    <property type="entry name" value="Pneumo_ncap"/>
</dbReference>
<dbReference type="Pfam" id="PF03246">
    <property type="entry name" value="Pneumo_ncap"/>
    <property type="match status" value="1"/>
</dbReference>
<sequence length="391" mass="43445">MALSKVKLNDTFNKDQLLSTSKYTIQRSTGDNIDIPNYDVQKHLNKLCGMLLITEDANHKFTGLIGILYAMSRLGREDTLKILKDAGYQVRANGVDVITHRQDVNGKEMKFEVLTLVSLTSEVQGNIEIESRKSYKKMLKEMGEVAPEYRHDSPDCGMIVLCVAALVITKLAAGDRSGLTAVIRRANNVLRNEMKRYKGLIPKDIANSFYEVIEKYPHYIDVFVHFGIAQSSTRGGSRVEGIFAGLFMNAYGAGQVMLRWGVLAKSVKNIMLGHASVQAEMEQVVEVYEYAQKLGGEAGFYHILNNPKASLLSLTQFPNFSSVVLGNAAGLGIMGEYRGTPRNQDLYDAAKAYAEQLKENGVINYSVLDLTTEELEAIKNQLNPKDNDVEL</sequence>
<organism>
    <name type="scientific">Bovine respiratory syncytial virus (strain A51908)</name>
    <name type="common">BRS</name>
    <dbReference type="NCBI Taxonomy" id="11247"/>
    <lineage>
        <taxon>Viruses</taxon>
        <taxon>Riboviria</taxon>
        <taxon>Orthornavirae</taxon>
        <taxon>Negarnaviricota</taxon>
        <taxon>Haploviricotina</taxon>
        <taxon>Monjiviricetes</taxon>
        <taxon>Mononegavirales</taxon>
        <taxon>Pneumoviridae</taxon>
        <taxon>Orthopneumovirus</taxon>
        <taxon>Orthopneumovirus bovis</taxon>
        <taxon>bovine respiratory syncytial virus</taxon>
    </lineage>
</organism>
<evidence type="ECO:0000250" key="1">
    <source>
        <dbReference type="UniProtKB" id="P03418"/>
    </source>
</evidence>
<evidence type="ECO:0000269" key="2">
    <source>
    </source>
</evidence>
<evidence type="ECO:0000269" key="3">
    <source>
    </source>
</evidence>
<evidence type="ECO:0000269" key="4">
    <source>
    </source>
</evidence>
<evidence type="ECO:0000305" key="5"/>
<evidence type="ECO:0000305" key="6">
    <source>
    </source>
</evidence>
<gene>
    <name type="primary">N</name>
</gene>
<reference key="1">
    <citation type="journal article" date="1991" name="Virology">
        <title>Molecular cloning and sequence analysis of bovine respiratory syncytial virus mRNA encoding the major nucleocapsid protein.</title>
        <authorList>
            <person name="Samal S.K."/>
            <person name="Zamora M."/>
            <person name="McPhillips T.H."/>
            <person name="Mohanty S.B."/>
        </authorList>
    </citation>
    <scope>NUCLEOTIDE SEQUENCE [MRNA]</scope>
</reference>
<reference key="2">
    <citation type="journal article" date="2001" name="Virus Genes">
        <title>Rescue of bovine respiratory syncytial virus from cloned cDNA: entire genome sequence of BRSV strain A51908.</title>
        <authorList>
            <person name="Yunus A.S."/>
            <person name="Khattar S.K."/>
            <person name="Collins P.L."/>
            <person name="Samal S.K."/>
        </authorList>
    </citation>
    <scope>NUCLEOTIDE SEQUENCE [GENOMIC RNA]</scope>
    <source>
        <strain>A51908</strain>
        <strain>ATCC 51908</strain>
    </source>
</reference>
<reference key="3">
    <citation type="journal article" date="1996" name="J. Gen. Virol.">
        <title>Mapping the domains on the phosphoprotein of bovine respiratory syncytial virus required for N-P interaction using a two-hybrid system.</title>
        <authorList>
            <person name="Mallipeddi S.K."/>
            <person name="Lupiani B."/>
            <person name="Samal S.K."/>
        </authorList>
    </citation>
    <scope>INTERACTION WITH THE PHOSPHOPROTEIN</scope>
</reference>
<reference key="4">
    <citation type="journal article" date="2000" name="Virology">
        <title>Mutational analysis of the bovine respiratory syncytial virus nucleocapsid protein using a minigenome system: mutations that affect encapsidation, RNA synthesis, and interaction with the phosphoprotein.</title>
        <authorList>
            <person name="Khattar S.K."/>
            <person name="Yunus A.S."/>
            <person name="Collins P.L."/>
            <person name="Samal S.K."/>
        </authorList>
    </citation>
    <scope>INTERACTION WITH THE PHOSPHOPROTEIN</scope>
    <scope>MUTAGENESIS OF LEU-3; CYS-48; CYS-156; CYS-162 AND LEU-391</scope>
    <scope>FUNCTION</scope>
</reference>
<reference key="5">
    <citation type="journal article" date="2020" name="J. Virol.">
        <title>Respiratory syncytial virus sequesters NF-kappaB subunit p65 to cytoplasmic inclusion bodies to inhibit innate immune signalling.</title>
        <authorList>
            <person name="Jobe F."/>
            <person name="Simpson J."/>
            <person name="Hawes P."/>
            <person name="Guzman E."/>
            <person name="Bailey D."/>
        </authorList>
    </citation>
    <scope>FUNCTION</scope>
    <scope>SUBCELLULAR LOCATION</scope>
    <scope>INTERACTION WITH HOST NF-KAPPA-B</scope>
</reference>
<accession>P22677</accession>
<accession>Q77KZ2</accession>
<accession>Q77L02</accession>
<keyword id="KW-0167">Capsid protein</keyword>
<keyword id="KW-1139">Helical capsid protein</keyword>
<keyword id="KW-1035">Host cytoplasm</keyword>
<keyword id="KW-0945">Host-virus interaction</keyword>
<keyword id="KW-1090">Inhibition of host innate immune response by virus</keyword>
<keyword id="KW-1114">Inhibition of host interferon signaling pathway by virus</keyword>
<keyword id="KW-1097">Inhibition of host MAVS by virus</keyword>
<keyword id="KW-1089">Inhibition of host MDA5 by virus</keyword>
<keyword id="KW-1100">Inhibition of host NF-kappa-B by virus</keyword>
<keyword id="KW-1102">Inhibition of host PKR by virus</keyword>
<keyword id="KW-1113">Inhibition of host RLR pathway by virus</keyword>
<keyword id="KW-0922">Interferon antiviral system evasion</keyword>
<keyword id="KW-0597">Phosphoprotein</keyword>
<keyword id="KW-1185">Reference proteome</keyword>
<keyword id="KW-0687">Ribonucleoprotein</keyword>
<keyword id="KW-0694">RNA-binding</keyword>
<keyword id="KW-0899">Viral immunoevasion</keyword>
<keyword id="KW-0543">Viral nucleoprotein</keyword>
<keyword id="KW-0946">Virion</keyword>
<feature type="chain" id="PRO_0000142648" description="Nucleoprotein">
    <location>
        <begin position="1"/>
        <end position="391"/>
    </location>
</feature>
<feature type="region of interest" description="Involved in RNA synthesis and encapsidation" evidence="2">
    <location>
        <begin position="1"/>
        <end position="364"/>
    </location>
</feature>
<feature type="region of interest" description="Interaction with the phosphoprotein" evidence="2">
    <location>
        <begin position="244"/>
        <end position="290"/>
    </location>
</feature>
<feature type="region of interest" description="Interaction with the phosphoprotein" evidence="2">
    <location>
        <begin position="338"/>
        <end position="364"/>
    </location>
</feature>
<feature type="modified residue" description="Phosphotyrosine" evidence="1">
    <location>
        <position position="38"/>
    </location>
</feature>
<feature type="sequence variant" description="In strain: ATCC 51908.">
    <original>I</original>
    <variation>M</variation>
    <location>
        <position position="67"/>
    </location>
</feature>
<feature type="sequence variant" description="In strain: ATCC 51908.">
    <original>I</original>
    <variation>F</variation>
    <location>
        <position position="213"/>
    </location>
</feature>
<feature type="mutagenesis site" description="Complete loss of encapsidation but no effect on viral RNA synthesis." evidence="2">
    <original>L</original>
    <variation>A</variation>
    <location>
        <position position="3"/>
    </location>
</feature>
<feature type="mutagenesis site" description="About 80-95% inhibition of viral RNA synthesis." evidence="2">
    <original>L</original>
    <variation>E</variation>
    <variation>K</variation>
    <location>
        <position position="3"/>
    </location>
</feature>
<feature type="mutagenesis site" description="No effect on viral RNA synthesis." evidence="2">
    <original>L</original>
    <variation>G</variation>
    <location>
        <position position="3"/>
    </location>
</feature>
<feature type="mutagenesis site" description="About 80-95% inhibition of viral RNA synthesis." evidence="2">
    <original>C</original>
    <variation>S</variation>
    <location>
        <position position="48"/>
    </location>
</feature>
<feature type="mutagenesis site" description="Complete loss of viral RNA synthesis and encapsidation; when associated with S-162." evidence="2">
    <original>C</original>
    <variation>S</variation>
    <location>
        <position position="156"/>
    </location>
</feature>
<feature type="mutagenesis site" description="Complete loss of viral RNA synthesis and encapsidation; when associated with S-156." evidence="2">
    <original>C</original>
    <variation>S</variation>
    <location>
        <position position="162"/>
    </location>
</feature>
<feature type="mutagenesis site" description="About 80-95% inhibition of viral RNA synthesis." evidence="2">
    <original>L</original>
    <variation>A</variation>
    <variation>K</variation>
    <location>
        <position position="391"/>
    </location>
</feature>
<feature type="mutagenesis site" description="Complete loss of viral RNA synthesis." evidence="2">
    <original>L</original>
    <variation>E</variation>
    <variation>G</variation>
    <location>
        <position position="391"/>
    </location>
</feature>
<organismHost>
    <name type="scientific">Bos taurus</name>
    <name type="common">Bovine</name>
    <dbReference type="NCBI Taxonomy" id="9913"/>
</organismHost>
<comment type="function">
    <text evidence="1 3 6">Encapsidates the viral RNA genome by forming a left-handed helical nucleocapsid that protects the RNA from nucleases (Probable). RNA replication depends on the availability of soluble nucleoprotein (By similarity). The encapsidated genomic RNA is termed the NC and serves as template for transcription and replication (By similarity). Together with the phosphoprotein, sequesters host NF-kappa-B in inclusion bodies (IBs) thereby inhibiting this host defense pathway (PubMed:32878896). May also act as a modulator of the innate immune response by sequestration of host IFIH1/MDA5 and MAVS into IBs (By similarity).</text>
</comment>
<comment type="subunit">
    <text evidence="1 2 3 4">Homomultimerizes to form the nucleocapsid (By similarity). Binds to viral genomic RNA (By similarity). Interacts with the phosphoprotein P (PubMed:10772994, PubMed:8609467). When in a monomeric RNA-free form, interacts with the phosphoprotein (via N-terminus) (By similarity). Interacts with protein M2-1; this interaction allows the association of nucleocapsid with the matrix protein (By similarity). Interacts with host EIF2AK2/PKR; this interaction inhibits EIF2AK2 phosphorylation of EIF2S1 and blocks EIF2AK2-mediated translation shutoff (By similarity). Interacts with host EIF1AX; this interaction recruits EIF1AX to the viral replication complex to facilitate viral genomic RNA synthesis and virus production (By similarity). Interacts with host NF-kappa-B; this interaction sequesters NF-kappa-B in inclusion bodies (PubMed:32878896).</text>
</comment>
<comment type="subcellular location">
    <subcellularLocation>
        <location evidence="1">Virion</location>
    </subcellularLocation>
    <subcellularLocation>
        <location evidence="3">Host cytoplasm</location>
    </subcellularLocation>
    <text evidence="3">Localizes in cytoplasmic inclusion bodies.</text>
</comment>
<comment type="PTM">
    <text evidence="1">Tyrosine phosphorylation modulates viral transcription and replication.</text>
</comment>
<comment type="similarity">
    <text evidence="5">Belongs to the paramyxoviruses nucleocapsid family.</text>
</comment>
<proteinExistence type="evidence at protein level"/>
<name>NCAP_BRSVA</name>
<protein>
    <recommendedName>
        <fullName>Nucleoprotein</fullName>
        <shortName>Protein N</shortName>
    </recommendedName>
    <alternativeName>
        <fullName>Nucleocapsid protein</fullName>
    </alternativeName>
</protein>